<dbReference type="EC" id="3.1.3.11" evidence="1"/>
<dbReference type="EMBL" id="CP001173">
    <property type="protein sequence ID" value="ACI28214.1"/>
    <property type="molecule type" value="Genomic_DNA"/>
</dbReference>
<dbReference type="RefSeq" id="WP_000384754.1">
    <property type="nucleotide sequence ID" value="NC_011333.1"/>
</dbReference>
<dbReference type="SMR" id="B5Z9G5"/>
<dbReference type="KEGG" id="hpg:HPG27_1472"/>
<dbReference type="HOGENOM" id="CLU_039977_3_0_7"/>
<dbReference type="UniPathway" id="UPA00138"/>
<dbReference type="Proteomes" id="UP000001735">
    <property type="component" value="Chromosome"/>
</dbReference>
<dbReference type="GO" id="GO:0005829">
    <property type="term" value="C:cytosol"/>
    <property type="evidence" value="ECO:0007669"/>
    <property type="project" value="TreeGrafter"/>
</dbReference>
<dbReference type="GO" id="GO:0042132">
    <property type="term" value="F:fructose 1,6-bisphosphate 1-phosphatase activity"/>
    <property type="evidence" value="ECO:0007669"/>
    <property type="project" value="UniProtKB-UniRule"/>
</dbReference>
<dbReference type="GO" id="GO:0000287">
    <property type="term" value="F:magnesium ion binding"/>
    <property type="evidence" value="ECO:0007669"/>
    <property type="project" value="UniProtKB-UniRule"/>
</dbReference>
<dbReference type="GO" id="GO:0030388">
    <property type="term" value="P:fructose 1,6-bisphosphate metabolic process"/>
    <property type="evidence" value="ECO:0007669"/>
    <property type="project" value="TreeGrafter"/>
</dbReference>
<dbReference type="GO" id="GO:0006002">
    <property type="term" value="P:fructose 6-phosphate metabolic process"/>
    <property type="evidence" value="ECO:0007669"/>
    <property type="project" value="TreeGrafter"/>
</dbReference>
<dbReference type="GO" id="GO:0006000">
    <property type="term" value="P:fructose metabolic process"/>
    <property type="evidence" value="ECO:0007669"/>
    <property type="project" value="TreeGrafter"/>
</dbReference>
<dbReference type="GO" id="GO:0006094">
    <property type="term" value="P:gluconeogenesis"/>
    <property type="evidence" value="ECO:0007669"/>
    <property type="project" value="UniProtKB-UniRule"/>
</dbReference>
<dbReference type="GO" id="GO:0005986">
    <property type="term" value="P:sucrose biosynthetic process"/>
    <property type="evidence" value="ECO:0007669"/>
    <property type="project" value="TreeGrafter"/>
</dbReference>
<dbReference type="FunFam" id="3.30.540.10:FF:000036">
    <property type="entry name" value="Fructose-1,6-bisphosphatase class 1"/>
    <property type="match status" value="1"/>
</dbReference>
<dbReference type="FunFam" id="3.40.190.80:FF:000028">
    <property type="entry name" value="Fructose-1,6-bisphosphatase class 1"/>
    <property type="match status" value="1"/>
</dbReference>
<dbReference type="Gene3D" id="3.40.190.80">
    <property type="match status" value="1"/>
</dbReference>
<dbReference type="Gene3D" id="3.30.540.10">
    <property type="entry name" value="Fructose-1,6-Bisphosphatase, subunit A, domain 1"/>
    <property type="match status" value="1"/>
</dbReference>
<dbReference type="HAMAP" id="MF_01855">
    <property type="entry name" value="FBPase_class1"/>
    <property type="match status" value="1"/>
</dbReference>
<dbReference type="InterPro" id="IPR044015">
    <property type="entry name" value="FBPase_C_dom"/>
</dbReference>
<dbReference type="InterPro" id="IPR000146">
    <property type="entry name" value="FBPase_class-1"/>
</dbReference>
<dbReference type="InterPro" id="IPR033391">
    <property type="entry name" value="FBPase_N"/>
</dbReference>
<dbReference type="InterPro" id="IPR028343">
    <property type="entry name" value="FBPtase"/>
</dbReference>
<dbReference type="InterPro" id="IPR023079">
    <property type="entry name" value="SBPase"/>
</dbReference>
<dbReference type="NCBIfam" id="NF006781">
    <property type="entry name" value="PRK09293.2-1"/>
    <property type="match status" value="1"/>
</dbReference>
<dbReference type="PANTHER" id="PTHR11556">
    <property type="entry name" value="FRUCTOSE-1,6-BISPHOSPHATASE-RELATED"/>
    <property type="match status" value="1"/>
</dbReference>
<dbReference type="PANTHER" id="PTHR11556:SF35">
    <property type="entry name" value="SEDOHEPTULOSE-1,7-BISPHOSPHATASE, CHLOROPLASTIC"/>
    <property type="match status" value="1"/>
</dbReference>
<dbReference type="Pfam" id="PF00316">
    <property type="entry name" value="FBPase"/>
    <property type="match status" value="1"/>
</dbReference>
<dbReference type="Pfam" id="PF18913">
    <property type="entry name" value="FBPase_C"/>
    <property type="match status" value="1"/>
</dbReference>
<dbReference type="PIRSF" id="PIRSF500210">
    <property type="entry name" value="FBPtase"/>
    <property type="match status" value="1"/>
</dbReference>
<dbReference type="PIRSF" id="PIRSF000904">
    <property type="entry name" value="FBPtase_SBPase"/>
    <property type="match status" value="1"/>
</dbReference>
<dbReference type="PRINTS" id="PR01958">
    <property type="entry name" value="S17BPHPHTASE"/>
</dbReference>
<dbReference type="SUPFAM" id="SSF56655">
    <property type="entry name" value="Carbohydrate phosphatase"/>
    <property type="match status" value="1"/>
</dbReference>
<sequence>MDYKHFKGKHANIVIEIISLLEKGVKKAQEILEKPDAGSYTKLENSSGDTPIKADLALDKFLEENFLSLENIKSVFSEEKETPVTKENGSYLIAYDPLDGSSVMEANFLVGTIIGVYEKDYKAQNLVASLYVVFGHKIELVVALEEVYRYAFYQNKFHFIETIVLENKGKIIASGGNQKDFSLGLKKALEGFFAENYRLRYSGSMVADVHHVLIKKGGMFSYPQKKLRKLFEVFPLALIIEKAKGEAFYFDKGVKKRLLEQSVESYHEKSECYLASPHEAQILEKYLKGE</sequence>
<keyword id="KW-0119">Carbohydrate metabolism</keyword>
<keyword id="KW-0963">Cytoplasm</keyword>
<keyword id="KW-0378">Hydrolase</keyword>
<keyword id="KW-0460">Magnesium</keyword>
<keyword id="KW-0479">Metal-binding</keyword>
<keyword id="KW-1185">Reference proteome</keyword>
<accession>B5Z9G5</accession>
<reference key="1">
    <citation type="journal article" date="2009" name="J. Bacteriol.">
        <title>The complete genome sequence of Helicobacter pylori strain G27.</title>
        <authorList>
            <person name="Baltrus D.A."/>
            <person name="Amieva M.R."/>
            <person name="Covacci A."/>
            <person name="Lowe T.M."/>
            <person name="Merrell D.S."/>
            <person name="Ottemann K.M."/>
            <person name="Stein M."/>
            <person name="Salama N.R."/>
            <person name="Guillemin K."/>
        </authorList>
    </citation>
    <scope>NUCLEOTIDE SEQUENCE [LARGE SCALE GENOMIC DNA]</scope>
    <source>
        <strain>G27</strain>
    </source>
</reference>
<proteinExistence type="inferred from homology"/>
<comment type="catalytic activity">
    <reaction evidence="1">
        <text>beta-D-fructose 1,6-bisphosphate + H2O = beta-D-fructose 6-phosphate + phosphate</text>
        <dbReference type="Rhea" id="RHEA:11064"/>
        <dbReference type="ChEBI" id="CHEBI:15377"/>
        <dbReference type="ChEBI" id="CHEBI:32966"/>
        <dbReference type="ChEBI" id="CHEBI:43474"/>
        <dbReference type="ChEBI" id="CHEBI:57634"/>
        <dbReference type="EC" id="3.1.3.11"/>
    </reaction>
</comment>
<comment type="cofactor">
    <cofactor evidence="1">
        <name>Mg(2+)</name>
        <dbReference type="ChEBI" id="CHEBI:18420"/>
    </cofactor>
    <text evidence="1">Binds 2 magnesium ions per subunit.</text>
</comment>
<comment type="pathway">
    <text evidence="1">Carbohydrate biosynthesis; gluconeogenesis.</text>
</comment>
<comment type="subunit">
    <text evidence="1">Homotetramer.</text>
</comment>
<comment type="subcellular location">
    <subcellularLocation>
        <location evidence="1">Cytoplasm</location>
    </subcellularLocation>
</comment>
<comment type="similarity">
    <text evidence="1">Belongs to the FBPase class 1 family.</text>
</comment>
<name>F16PA_HELPG</name>
<organism>
    <name type="scientific">Helicobacter pylori (strain G27)</name>
    <dbReference type="NCBI Taxonomy" id="563041"/>
    <lineage>
        <taxon>Bacteria</taxon>
        <taxon>Pseudomonadati</taxon>
        <taxon>Campylobacterota</taxon>
        <taxon>Epsilonproteobacteria</taxon>
        <taxon>Campylobacterales</taxon>
        <taxon>Helicobacteraceae</taxon>
        <taxon>Helicobacter</taxon>
    </lineage>
</organism>
<evidence type="ECO:0000255" key="1">
    <source>
        <dbReference type="HAMAP-Rule" id="MF_01855"/>
    </source>
</evidence>
<gene>
    <name evidence="1" type="primary">fbp</name>
    <name type="ordered locus">HPG27_1472</name>
</gene>
<protein>
    <recommendedName>
        <fullName evidence="1">Fructose-1,6-bisphosphatase class 1</fullName>
        <shortName evidence="1">FBPase class 1</shortName>
        <ecNumber evidence="1">3.1.3.11</ecNumber>
    </recommendedName>
    <alternativeName>
        <fullName evidence="1">D-fructose-1,6-bisphosphate 1-phosphohydrolase class 1</fullName>
    </alternativeName>
</protein>
<feature type="chain" id="PRO_0000364574" description="Fructose-1,6-bisphosphatase class 1">
    <location>
        <begin position="1"/>
        <end position="290"/>
    </location>
</feature>
<feature type="binding site" evidence="1">
    <location>
        <position position="78"/>
    </location>
    <ligand>
        <name>Mg(2+)</name>
        <dbReference type="ChEBI" id="CHEBI:18420"/>
        <label>1</label>
    </ligand>
</feature>
<feature type="binding site" evidence="1">
    <location>
        <position position="96"/>
    </location>
    <ligand>
        <name>Mg(2+)</name>
        <dbReference type="ChEBI" id="CHEBI:18420"/>
        <label>1</label>
    </ligand>
</feature>
<feature type="binding site" evidence="1">
    <location>
        <position position="96"/>
    </location>
    <ligand>
        <name>Mg(2+)</name>
        <dbReference type="ChEBI" id="CHEBI:18420"/>
        <label>2</label>
    </ligand>
</feature>
<feature type="binding site" evidence="1">
    <location>
        <position position="98"/>
    </location>
    <ligand>
        <name>Mg(2+)</name>
        <dbReference type="ChEBI" id="CHEBI:18420"/>
        <label>1</label>
    </ligand>
</feature>
<feature type="binding site" evidence="1">
    <location>
        <begin position="99"/>
        <end position="102"/>
    </location>
    <ligand>
        <name>substrate</name>
    </ligand>
</feature>
<feature type="binding site" evidence="1">
    <location>
        <position position="99"/>
    </location>
    <ligand>
        <name>Mg(2+)</name>
        <dbReference type="ChEBI" id="CHEBI:18420"/>
        <label>2</label>
    </ligand>
</feature>
<feature type="binding site" evidence="1">
    <location>
        <position position="201"/>
    </location>
    <ligand>
        <name>substrate</name>
    </ligand>
</feature>
<feature type="binding site" evidence="1">
    <location>
        <position position="226"/>
    </location>
    <ligand>
        <name>substrate</name>
    </ligand>
</feature>
<feature type="binding site" evidence="1">
    <location>
        <position position="232"/>
    </location>
    <ligand>
        <name>Mg(2+)</name>
        <dbReference type="ChEBI" id="CHEBI:18420"/>
        <label>2</label>
    </ligand>
</feature>